<feature type="signal peptide" evidence="1">
    <location>
        <begin position="1"/>
        <end position="22"/>
    </location>
</feature>
<feature type="chain" id="PRO_0000022427" description="Stereocilin">
    <location>
        <begin position="23"/>
        <end position="1809"/>
    </location>
</feature>
<feature type="region of interest" description="Disordered" evidence="2">
    <location>
        <begin position="376"/>
        <end position="426"/>
    </location>
</feature>
<feature type="compositionally biased region" description="Pro residues" evidence="2">
    <location>
        <begin position="378"/>
        <end position="399"/>
    </location>
</feature>
<feature type="compositionally biased region" description="Pro residues" evidence="2">
    <location>
        <begin position="407"/>
        <end position="426"/>
    </location>
</feature>
<feature type="glycosylation site" description="N-linked (GlcNAc...) asparagine" evidence="1">
    <location>
        <position position="63"/>
    </location>
</feature>
<feature type="glycosylation site" description="N-linked (GlcNAc...) asparagine" evidence="1">
    <location>
        <position position="200"/>
    </location>
</feature>
<feature type="glycosylation site" description="N-linked (GlcNAc...) asparagine" evidence="1">
    <location>
        <position position="295"/>
    </location>
</feature>
<feature type="glycosylation site" description="N-linked (GlcNAc...) asparagine" evidence="1">
    <location>
        <position position="352"/>
    </location>
</feature>
<feature type="glycosylation site" description="N-linked (GlcNAc...) asparagine" evidence="1">
    <location>
        <position position="364"/>
    </location>
</feature>
<feature type="glycosylation site" description="N-linked (GlcNAc...) asparagine" evidence="1">
    <location>
        <position position="467"/>
    </location>
</feature>
<feature type="glycosylation site" description="N-linked (GlcNAc...) asparagine" evidence="1">
    <location>
        <position position="516"/>
    </location>
</feature>
<feature type="glycosylation site" description="N-linked (GlcNAc...) asparagine" evidence="1">
    <location>
        <position position="580"/>
    </location>
</feature>
<feature type="glycosylation site" description="N-linked (GlcNAc...) asparagine" evidence="1">
    <location>
        <position position="605"/>
    </location>
</feature>
<feature type="glycosylation site" description="N-linked (GlcNAc...) asparagine" evidence="1">
    <location>
        <position position="696"/>
    </location>
</feature>
<feature type="glycosylation site" description="N-linked (GlcNAc...) asparagine" evidence="1">
    <location>
        <position position="860"/>
    </location>
</feature>
<feature type="glycosylation site" description="N-linked (GlcNAc...) asparagine" evidence="1">
    <location>
        <position position="952"/>
    </location>
</feature>
<feature type="glycosylation site" description="N-linked (GlcNAc...) asparagine" evidence="1">
    <location>
        <position position="1000"/>
    </location>
</feature>
<feature type="glycosylation site" description="N-linked (GlcNAc...) asparagine" evidence="1">
    <location>
        <position position="1213"/>
    </location>
</feature>
<feature type="glycosylation site" description="N-linked (GlcNAc...) asparagine" evidence="1">
    <location>
        <position position="1308"/>
    </location>
</feature>
<feature type="sequence conflict" description="In Ref. 1; AAL35321." evidence="5" ref="1">
    <original>SRP</original>
    <variation>NRR</variation>
    <location>
        <begin position="477"/>
        <end position="479"/>
    </location>
</feature>
<feature type="sequence conflict" description="In Ref. 1; AAL35321." evidence="5" ref="1">
    <original>P</original>
    <variation>L</variation>
    <location>
        <position position="622"/>
    </location>
</feature>
<feature type="sequence conflict" description="In Ref. 1; AAL35321." evidence="5" ref="1">
    <original>D</original>
    <variation>G</variation>
    <location>
        <position position="937"/>
    </location>
</feature>
<feature type="sequence conflict" description="In Ref. 1; AAL35321." evidence="5" ref="1">
    <original>V</original>
    <variation>L</variation>
    <location>
        <position position="1632"/>
    </location>
</feature>
<dbReference type="EMBL" id="AF375593">
    <property type="protein sequence ID" value="AAL35321.1"/>
    <property type="molecule type" value="mRNA"/>
</dbReference>
<dbReference type="EMBL" id="AL845466">
    <property type="status" value="NOT_ANNOTATED_CDS"/>
    <property type="molecule type" value="Genomic_DNA"/>
</dbReference>
<dbReference type="CCDS" id="CCDS16641.1"/>
<dbReference type="RefSeq" id="NP_536707.2">
    <property type="nucleotide sequence ID" value="NM_080459.2"/>
</dbReference>
<dbReference type="RefSeq" id="XP_006498797.1">
    <property type="nucleotide sequence ID" value="XM_006498734.2"/>
</dbReference>
<dbReference type="SMR" id="Q8VIM6"/>
<dbReference type="FunCoup" id="Q8VIM6">
    <property type="interactions" value="2"/>
</dbReference>
<dbReference type="STRING" id="10090.ENSMUSP00000039378"/>
<dbReference type="GlyCosmos" id="Q8VIM6">
    <property type="glycosylation" value="15 sites, No reported glycans"/>
</dbReference>
<dbReference type="GlyGen" id="Q8VIM6">
    <property type="glycosylation" value="19 sites"/>
</dbReference>
<dbReference type="iPTMnet" id="Q8VIM6"/>
<dbReference type="PhosphoSitePlus" id="Q8VIM6"/>
<dbReference type="PaxDb" id="10090-ENSMUSP00000039378"/>
<dbReference type="ProteomicsDB" id="254601"/>
<dbReference type="Antibodypedia" id="56334">
    <property type="antibodies" value="13 antibodies from 7 providers"/>
</dbReference>
<dbReference type="Ensembl" id="ENSMUST00000038389.15">
    <property type="protein sequence ID" value="ENSMUSP00000039378.9"/>
    <property type="gene ID" value="ENSMUSG00000033498.15"/>
</dbReference>
<dbReference type="GeneID" id="140476"/>
<dbReference type="KEGG" id="mmu:140476"/>
<dbReference type="UCSC" id="uc008lyw.1">
    <property type="organism name" value="mouse"/>
</dbReference>
<dbReference type="AGR" id="MGI:2153816"/>
<dbReference type="CTD" id="161497"/>
<dbReference type="MGI" id="MGI:2153816">
    <property type="gene designation" value="Strc"/>
</dbReference>
<dbReference type="VEuPathDB" id="HostDB:ENSMUSG00000033498"/>
<dbReference type="eggNOG" id="ENOG502QTHC">
    <property type="taxonomic scope" value="Eukaryota"/>
</dbReference>
<dbReference type="GeneTree" id="ENSGT00950000182957"/>
<dbReference type="HOGENOM" id="CLU_001286_0_0_1"/>
<dbReference type="InParanoid" id="Q8VIM6"/>
<dbReference type="OMA" id="LKLPHYK"/>
<dbReference type="OrthoDB" id="9447519at2759"/>
<dbReference type="TreeFam" id="TF330914"/>
<dbReference type="BioGRID-ORCS" id="140476">
    <property type="hits" value="1 hit in 79 CRISPR screens"/>
</dbReference>
<dbReference type="PRO" id="PR:Q8VIM6"/>
<dbReference type="Proteomes" id="UP000000589">
    <property type="component" value="Chromosome 2"/>
</dbReference>
<dbReference type="RNAct" id="Q8VIM6">
    <property type="molecule type" value="protein"/>
</dbReference>
<dbReference type="Bgee" id="ENSMUSG00000033498">
    <property type="expression patterns" value="Expressed in utricle of membranous labyrinth and 12 other cell types or tissues"/>
</dbReference>
<dbReference type="ExpressionAtlas" id="Q8VIM6">
    <property type="expression patterns" value="baseline and differential"/>
</dbReference>
<dbReference type="GO" id="GO:0009986">
    <property type="term" value="C:cell surface"/>
    <property type="evidence" value="ECO:0007669"/>
    <property type="project" value="UniProtKB-SubCell"/>
</dbReference>
<dbReference type="GO" id="GO:0060091">
    <property type="term" value="C:kinocilium"/>
    <property type="evidence" value="ECO:0000314"/>
    <property type="project" value="UniProtKB"/>
</dbReference>
<dbReference type="GO" id="GO:0032426">
    <property type="term" value="C:stereocilium tip"/>
    <property type="evidence" value="ECO:0000314"/>
    <property type="project" value="UniProtKB"/>
</dbReference>
<dbReference type="GO" id="GO:0060088">
    <property type="term" value="P:auditory receptor cell stereocilium organization"/>
    <property type="evidence" value="ECO:0000315"/>
    <property type="project" value="UniProtKB"/>
</dbReference>
<dbReference type="GO" id="GO:0050910">
    <property type="term" value="P:detection of mechanical stimulus involved in sensory perception of sound"/>
    <property type="evidence" value="ECO:0000315"/>
    <property type="project" value="MGI"/>
</dbReference>
<dbReference type="GO" id="GO:0060122">
    <property type="term" value="P:inner ear receptor cell stereocilium organization"/>
    <property type="evidence" value="ECO:0000315"/>
    <property type="project" value="MGI"/>
</dbReference>
<dbReference type="GO" id="GO:0008104">
    <property type="term" value="P:protein localization"/>
    <property type="evidence" value="ECO:0000315"/>
    <property type="project" value="MGI"/>
</dbReference>
<dbReference type="GO" id="GO:0007605">
    <property type="term" value="P:sensory perception of sound"/>
    <property type="evidence" value="ECO:0000266"/>
    <property type="project" value="MGI"/>
</dbReference>
<dbReference type="InterPro" id="IPR026664">
    <property type="entry name" value="Stereocilin-rel"/>
</dbReference>
<dbReference type="InterPro" id="IPR048992">
    <property type="entry name" value="Stereocilin_LRR"/>
</dbReference>
<dbReference type="PANTHER" id="PTHR23412">
    <property type="entry name" value="STEREOCILIN RELATED"/>
    <property type="match status" value="1"/>
</dbReference>
<dbReference type="PANTHER" id="PTHR23412:SF14">
    <property type="entry name" value="STEREOCILIN-RELATED"/>
    <property type="match status" value="1"/>
</dbReference>
<dbReference type="Pfam" id="PF21058">
    <property type="entry name" value="Stereocilin"/>
    <property type="match status" value="1"/>
</dbReference>
<organism>
    <name type="scientific">Mus musculus</name>
    <name type="common">Mouse</name>
    <dbReference type="NCBI Taxonomy" id="10090"/>
    <lineage>
        <taxon>Eukaryota</taxon>
        <taxon>Metazoa</taxon>
        <taxon>Chordata</taxon>
        <taxon>Craniata</taxon>
        <taxon>Vertebrata</taxon>
        <taxon>Euteleostomi</taxon>
        <taxon>Mammalia</taxon>
        <taxon>Eutheria</taxon>
        <taxon>Euarchontoglires</taxon>
        <taxon>Glires</taxon>
        <taxon>Rodentia</taxon>
        <taxon>Myomorpha</taxon>
        <taxon>Muroidea</taxon>
        <taxon>Muridae</taxon>
        <taxon>Murinae</taxon>
        <taxon>Mus</taxon>
        <taxon>Mus</taxon>
    </lineage>
</organism>
<protein>
    <recommendedName>
        <fullName>Stereocilin</fullName>
    </recommendedName>
</protein>
<comment type="function">
    <text evidence="4">Essential to the formation of horizontal top connectors between outer hair cell stereocilia.</text>
</comment>
<comment type="subcellular location">
    <subcellularLocation>
        <location>Cell surface</location>
    </subcellularLocation>
    <subcellularLocation>
        <location>Cell projection</location>
        <location>Kinocilium</location>
    </subcellularLocation>
    <subcellularLocation>
        <location>Cell projection</location>
        <location>Stereocilium</location>
    </subcellularLocation>
</comment>
<comment type="tissue specificity">
    <text evidence="3 4">Strongly expressed in the inner ear, detected in the testis, and barely detected in the eye. Detected in the six sensory areas of the inner ear by immunofluorescence. Expressed only in the sensory hair cells and associated with the stereocilia, the stiff microvilli forming the structure for mechanoreception of sound stimulation.</text>
</comment>
<comment type="similarity">
    <text evidence="5">Belongs to the stereocilin family.</text>
</comment>
<keyword id="KW-0966">Cell projection</keyword>
<keyword id="KW-0969">Cilium</keyword>
<keyword id="KW-0325">Glycoprotein</keyword>
<keyword id="KW-1009">Hearing</keyword>
<keyword id="KW-1185">Reference proteome</keyword>
<keyword id="KW-0732">Signal</keyword>
<accession>Q8VIM6</accession>
<accession>A2ARP7</accession>
<sequence>MALSLQPQLLLLLSLLPQEVTSAPTGPQSLDAGLSLLKSFVATLDQAPQRSLSQSRFSAFLANISSSFQLGRMGEGPVGEPPPLQPPALRLHDFLVTLRGSPDWEPMLGLLGDVLALLGQEQTPRDFLVHQAGVLGGLVEALLGALVPGGPPAPTRPPCTRDGPSDCVLAADWLPSLMLLLEGTRWQALVQLQPSVDPTNATGLDGREPAPHFLQGLLGLLTPAGELGSEEALWGGLLRTVGAPLYAAFQEGLLRVTHSLQDEVFSIMGQPEPDASGQCQGGNLQQLLLWGMRNNLSWDARALGFLSGSPPPPPALLHCLSRGVPLPRASQPAAHISPRQRRAISVEALCENHSGPEPPYSISNFSIYLLCQHIKPATPRPPPTTPRPPPTTPQPPPTTTQPIPDTTQPPPVTPRPPPTTPQPPPSTAVICQTAVWYAVSWAPGARGWLQACHDQFPDQFLDMICGNLSFSALSGPSRPLVKQLCAGLLPPPTSCPPGLIPVPLTPEIFWGCFLENETLWAERLCVEDSLQAVPPRNQAWVQHVCRGPTLDATDFPPCRVGPCGERCPDGGSFLLMVCANDTLYEALVPFWAWLAGQCRISRGGNDTCFLEGMLGPLLPSLPPLGPSPLCLAPGPFLLGMLSQLPRCQSSVPALAHPTRLHYLLRLLTFLLGPGTGGAETQGMLGQALLLSSLPDNCSFWDAFRPEGRRSVLRTVGEYLQREEPTPPGLDSSLSLGSGMSKMELLSCFSPVLWDLLQREKSVWALRTLVKAYLRMPPEDLQQLVLSAEMEAAQGFLTLMLRSWAKLKVQPSEEQAMGRLTALLLQRYPRLTSQLFIDMSPLIPFLAVPDLMRFPPSLLANDSVLAAIRDHSSGMKPEQKEALAKRLLAPELFGEVPDWPQELLWAALPLLPHLPLESFLQLSPHQIQALEDSWPVADLGPGHARHVLRSLVNQSMEDGEEQVLRLGSLACFLSPEELQSLVPLSDPMGPVEQGLLECAANGTLSPEGRVAYELLGVLRSSGGTVLSPRELRVWAPLFPQLGLRFLQELSETQLRAMLPALQGASVTPAQAVLLFGRLLPKHDLSLEELCSLHPLLPGLSPQTLQAIPKRVLVGACSCLGPELSRLSACQIAALLQTFRVKDGVKNMGAAGAGSAVCIPGQPTTWPDCLLPLLPLKLLQLDAAALLANRRLYRQLPWSEQQAQFLWKKMQVPTNLSLRNLQALGNLAGGMTCEFLQQISSMVDFLDVVHMLYQLPTGVRESLRACIWTELQRRMTMPEPELTTLGPELSELDTKLLLDLPIQLMDRLSNDSIMLVVEMVQGAPEQLLALTPLHQTALAERALKNLAPKETPISKEVLETLGPLVGFLGIESTRRIPLPILLSHLSQLQGFCLGETFATELGWLLLQEPVLGKPELWSQDEIEQAGRLVFTLSAEAISSIPREALGPETLERLLGKHQSWEQSRVGHLCGESQLAHKKAALVAGIVHPAAEGLQEPVPNCADIRGTFPAAWSATQISEMELSDFEDCLSLFAGDPGLGPEELRAAMGKAKQLWGPPRGFRPEQILQLGRLLIGLGERELQELTLVDWGVLSSLGQIDGWSSMQLRAVVSSFLRQSGRHVSHLDFIYLTALGYTVCGLRPEELQHISSWEFSQAALFLGSLHLPCSEEQLEVLAYLLVLPGGFGPVSNWGPEIFTEIGTIAAGIPDLALSALLRGQIQGLTPLAISVIPAPKFAVVFNPIQLSSLTRGQAVAVTPEQLAYLSPEQRRAVAWAQHEGKEIPEQLGRNSAWGLYDWFQASWALALPVSIFGHLL</sequence>
<reference key="1">
    <citation type="journal article" date="2001" name="Nat. Genet.">
        <title>Mutations in a new gene encoding a protein of the hair bundle cause non-syndromic deafness at the DFNB16 locus.</title>
        <authorList>
            <person name="Verpy E."/>
            <person name="Masmoudi S."/>
            <person name="Zwaenepoel I."/>
            <person name="Leibovici M."/>
            <person name="Hutchin T.P."/>
            <person name="Del Castillo I."/>
            <person name="Nouaille S."/>
            <person name="Blanchard S."/>
            <person name="Laine S."/>
            <person name="Popot J.-L."/>
            <person name="Moreno F."/>
            <person name="Mueller R.F."/>
            <person name="Petit C."/>
        </authorList>
    </citation>
    <scope>NUCLEOTIDE SEQUENCE [MRNA]</scope>
    <scope>SUBCELLULAR LOCATION</scope>
    <scope>TISSUE SPECIFICITY</scope>
    <source>
        <strain>BALB/cJ</strain>
        <tissue>Inner ear</tissue>
    </source>
</reference>
<reference key="2">
    <citation type="journal article" date="2009" name="PLoS Biol.">
        <title>Lineage-specific biology revealed by a finished genome assembly of the mouse.</title>
        <authorList>
            <person name="Church D.M."/>
            <person name="Goodstadt L."/>
            <person name="Hillier L.W."/>
            <person name="Zody M.C."/>
            <person name="Goldstein S."/>
            <person name="She X."/>
            <person name="Bult C.J."/>
            <person name="Agarwala R."/>
            <person name="Cherry J.L."/>
            <person name="DiCuccio M."/>
            <person name="Hlavina W."/>
            <person name="Kapustin Y."/>
            <person name="Meric P."/>
            <person name="Maglott D."/>
            <person name="Birtle Z."/>
            <person name="Marques A.C."/>
            <person name="Graves T."/>
            <person name="Zhou S."/>
            <person name="Teague B."/>
            <person name="Potamousis K."/>
            <person name="Churas C."/>
            <person name="Place M."/>
            <person name="Herschleb J."/>
            <person name="Runnheim R."/>
            <person name="Forrest D."/>
            <person name="Amos-Landgraf J."/>
            <person name="Schwartz D.C."/>
            <person name="Cheng Z."/>
            <person name="Lindblad-Toh K."/>
            <person name="Eichler E.E."/>
            <person name="Ponting C.P."/>
        </authorList>
    </citation>
    <scope>NUCLEOTIDE SEQUENCE [LARGE SCALE GENOMIC DNA]</scope>
    <source>
        <strain>C57BL/6J</strain>
    </source>
</reference>
<reference key="3">
    <citation type="journal article" date="2011" name="J. Comp. Neurol.">
        <title>Stereocilin connects outer hair cell stereocilia to one another and to the tectorial membrane.</title>
        <authorList>
            <person name="Verpy E."/>
            <person name="Leibovici M."/>
            <person name="Michalski N."/>
            <person name="Goodyear R.J."/>
            <person name="Houdon C."/>
            <person name="Weil D."/>
            <person name="Richardson G.P."/>
            <person name="Petit C."/>
        </authorList>
    </citation>
    <scope>FUNCTION</scope>
    <scope>TISSUE SPECIFICITY</scope>
    <scope>SUBCELLULAR LOCATION</scope>
</reference>
<proteinExistence type="evidence at transcript level"/>
<name>STRC_MOUSE</name>
<evidence type="ECO:0000255" key="1"/>
<evidence type="ECO:0000256" key="2">
    <source>
        <dbReference type="SAM" id="MobiDB-lite"/>
    </source>
</evidence>
<evidence type="ECO:0000269" key="3">
    <source>
    </source>
</evidence>
<evidence type="ECO:0000269" key="4">
    <source>
    </source>
</evidence>
<evidence type="ECO:0000305" key="5"/>
<gene>
    <name type="primary">Strc</name>
</gene>